<feature type="chain" id="PRO_0000146680" description="Small ribosomal subunit protein uS10m">
    <location>
        <begin position="1"/>
        <end position="158"/>
    </location>
</feature>
<reference key="1">
    <citation type="journal article" date="2003" name="PLoS Biol.">
        <title>The genome sequence of Caenorhabditis briggsae: a platform for comparative genomics.</title>
        <authorList>
            <person name="Stein L.D."/>
            <person name="Bao Z."/>
            <person name="Blasiar D."/>
            <person name="Blumenthal T."/>
            <person name="Brent M.R."/>
            <person name="Chen N."/>
            <person name="Chinwalla A."/>
            <person name="Clarke L."/>
            <person name="Clee C."/>
            <person name="Coghlan A."/>
            <person name="Coulson A."/>
            <person name="D'Eustachio P."/>
            <person name="Fitch D.H.A."/>
            <person name="Fulton L.A."/>
            <person name="Fulton R.E."/>
            <person name="Griffiths-Jones S."/>
            <person name="Harris T.W."/>
            <person name="Hillier L.W."/>
            <person name="Kamath R."/>
            <person name="Kuwabara P.E."/>
            <person name="Mardis E.R."/>
            <person name="Marra M.A."/>
            <person name="Miner T.L."/>
            <person name="Minx P."/>
            <person name="Mullikin J.C."/>
            <person name="Plumb R.W."/>
            <person name="Rogers J."/>
            <person name="Schein J.E."/>
            <person name="Sohrmann M."/>
            <person name="Spieth J."/>
            <person name="Stajich J.E."/>
            <person name="Wei C."/>
            <person name="Willey D."/>
            <person name="Wilson R.K."/>
            <person name="Durbin R.M."/>
            <person name="Waterston R.H."/>
        </authorList>
    </citation>
    <scope>NUCLEOTIDE SEQUENCE [LARGE SCALE GENOMIC DNA]</scope>
    <source>
        <strain>AF16</strain>
    </source>
</reference>
<proteinExistence type="inferred from homology"/>
<comment type="subcellular location">
    <subcellularLocation>
        <location evidence="1">Mitochondrion</location>
    </subcellularLocation>
</comment>
<comment type="similarity">
    <text evidence="2">Belongs to the universal ribosomal protein uS10 family.</text>
</comment>
<organism>
    <name type="scientific">Caenorhabditis briggsae</name>
    <dbReference type="NCBI Taxonomy" id="6238"/>
    <lineage>
        <taxon>Eukaryota</taxon>
        <taxon>Metazoa</taxon>
        <taxon>Ecdysozoa</taxon>
        <taxon>Nematoda</taxon>
        <taxon>Chromadorea</taxon>
        <taxon>Rhabditida</taxon>
        <taxon>Rhabditina</taxon>
        <taxon>Rhabditomorpha</taxon>
        <taxon>Rhabditoidea</taxon>
        <taxon>Rhabditidae</taxon>
        <taxon>Peloderinae</taxon>
        <taxon>Caenorhabditis</taxon>
    </lineage>
</organism>
<dbReference type="EMBL" id="HE600979">
    <property type="protein sequence ID" value="CAP33931.1"/>
    <property type="molecule type" value="Genomic_DNA"/>
</dbReference>
<dbReference type="SMR" id="Q615B0"/>
<dbReference type="FunCoup" id="Q615B0">
    <property type="interactions" value="2221"/>
</dbReference>
<dbReference type="STRING" id="6238.Q615B0"/>
<dbReference type="EnsemblMetazoa" id="CBG15759.1">
    <property type="protein sequence ID" value="CBG15759.1"/>
    <property type="gene ID" value="WBGene00035901"/>
</dbReference>
<dbReference type="KEGG" id="cbr:CBG_15759"/>
<dbReference type="CTD" id="8582862"/>
<dbReference type="WormBase" id="CBG15759">
    <property type="protein sequence ID" value="CBP10029"/>
    <property type="gene ID" value="WBGene00035901"/>
    <property type="gene designation" value="Cbr-mrps-10"/>
</dbReference>
<dbReference type="eggNOG" id="KOG3321">
    <property type="taxonomic scope" value="Eukaryota"/>
</dbReference>
<dbReference type="HOGENOM" id="CLU_099082_1_0_1"/>
<dbReference type="InParanoid" id="Q615B0"/>
<dbReference type="OMA" id="IRWVQPA"/>
<dbReference type="Proteomes" id="UP000008549">
    <property type="component" value="Unassembled WGS sequence"/>
</dbReference>
<dbReference type="GO" id="GO:0005763">
    <property type="term" value="C:mitochondrial small ribosomal subunit"/>
    <property type="evidence" value="ECO:0007669"/>
    <property type="project" value="InterPro"/>
</dbReference>
<dbReference type="GO" id="GO:0005739">
    <property type="term" value="C:mitochondrion"/>
    <property type="evidence" value="ECO:0000318"/>
    <property type="project" value="GO_Central"/>
</dbReference>
<dbReference type="Gene3D" id="3.30.70.600">
    <property type="entry name" value="Ribosomal protein S10 domain"/>
    <property type="match status" value="1"/>
</dbReference>
<dbReference type="InterPro" id="IPR027486">
    <property type="entry name" value="Ribosomal_uS10_dom"/>
</dbReference>
<dbReference type="InterPro" id="IPR036838">
    <property type="entry name" value="Ribosomal_uS10_dom_sf"/>
</dbReference>
<dbReference type="InterPro" id="IPR040055">
    <property type="entry name" value="Ribosomal_uS10m"/>
</dbReference>
<dbReference type="PANTHER" id="PTHR13334">
    <property type="entry name" value="MITOCHONDRIAL 28S RIBOSOMAL PROTEIN S10"/>
    <property type="match status" value="1"/>
</dbReference>
<dbReference type="PANTHER" id="PTHR13334:SF4">
    <property type="entry name" value="SMALL RIBOSOMAL SUBUNIT PROTEIN US10M"/>
    <property type="match status" value="1"/>
</dbReference>
<dbReference type="Pfam" id="PF00338">
    <property type="entry name" value="Ribosomal_S10"/>
    <property type="match status" value="1"/>
</dbReference>
<dbReference type="SMART" id="SM01403">
    <property type="entry name" value="Ribosomal_S10"/>
    <property type="match status" value="1"/>
</dbReference>
<dbReference type="SUPFAM" id="SSF54999">
    <property type="entry name" value="Ribosomal protein S10"/>
    <property type="match status" value="1"/>
</dbReference>
<gene>
    <name type="primary">mrps-10</name>
    <name type="ORF">CBG15759</name>
</gene>
<protein>
    <recommendedName>
        <fullName evidence="2">Small ribosomal subunit protein uS10m</fullName>
    </recommendedName>
    <alternativeName>
        <fullName evidence="2">28S ribosomal protein S10, mitochondrial</fullName>
        <shortName>MRP-S10</shortName>
        <shortName>S10mt</shortName>
    </alternativeName>
</protein>
<evidence type="ECO:0000250" key="1"/>
<evidence type="ECO:0000305" key="2"/>
<keyword id="KW-0496">Mitochondrion</keyword>
<keyword id="KW-1185">Reference proteome</keyword>
<keyword id="KW-0687">Ribonucleoprotein</keyword>
<keyword id="KW-0689">Ribosomal protein</keyword>
<sequence length="158" mass="18202">MLNIANTIRSTLLRSKTRNVRTLAATVNPAEQQQVQAVLPDKLYSSIEIEYRGHDKAVLKSYTTFLQQVCKHLEIPQGRLEVLPYIRWVQPALRSKFVHKKYKLHYETRTHITKLEILNVTGSTASTFLEYIERNIPEGVGMRVGFTELQPLPLTIQN</sequence>
<accession>Q615B0</accession>
<accession>A8XMQ5</accession>
<name>RT10_CAEBR</name>